<comment type="function">
    <text evidence="1">This protein binds specifically to 23S rRNA; its binding is stimulated by other ribosomal proteins, e.g. L4, L17, and L20. It is important during the early stages of 50S assembly. It makes multiple contacts with different domains of the 23S rRNA in the assembled 50S subunit and ribosome (By similarity).</text>
</comment>
<comment type="function">
    <text evidence="1">The globular domain of the protein is located near the polypeptide exit tunnel on the outside of the subunit, while an extended beta-hairpin is found that lines the wall of the exit tunnel in the center of the 70S ribosome.</text>
</comment>
<comment type="subunit">
    <text evidence="1">Part of the 50S ribosomal subunit.</text>
</comment>
<comment type="similarity">
    <text evidence="1">Belongs to the universal ribosomal protein uL22 family.</text>
</comment>
<name>RL22_TROWT</name>
<keyword id="KW-1185">Reference proteome</keyword>
<keyword id="KW-0687">Ribonucleoprotein</keyword>
<keyword id="KW-0689">Ribosomal protein</keyword>
<keyword id="KW-0694">RNA-binding</keyword>
<keyword id="KW-0699">rRNA-binding</keyword>
<evidence type="ECO:0000255" key="1">
    <source>
        <dbReference type="HAMAP-Rule" id="MF_01331"/>
    </source>
</evidence>
<evidence type="ECO:0000305" key="2"/>
<feature type="chain" id="PRO_0000125256" description="Large ribosomal subunit protein uL22">
    <location>
        <begin position="1"/>
        <end position="119"/>
    </location>
</feature>
<sequence>MSEEKDTPLEAFASLKHSGVTPQKVRRIVDLIRGRSVDEALAILRFSPHSASGILYKLIVSAQANYANLLGRDDDLFVSSVYVDEGKTYKRGRPRARGSSSRILKRGSHVTVTLSKEVR</sequence>
<protein>
    <recommendedName>
        <fullName evidence="1">Large ribosomal subunit protein uL22</fullName>
    </recommendedName>
    <alternativeName>
        <fullName evidence="2">50S ribosomal protein L22</fullName>
    </alternativeName>
</protein>
<proteinExistence type="inferred from homology"/>
<reference key="1">
    <citation type="journal article" date="2003" name="Genome Res.">
        <title>Tropheryma whipplei twist: a human pathogenic Actinobacteria with a reduced genome.</title>
        <authorList>
            <person name="Raoult D."/>
            <person name="Ogata H."/>
            <person name="Audic S."/>
            <person name="Robert C."/>
            <person name="Suhre K."/>
            <person name="Drancourt M."/>
            <person name="Claverie J.-M."/>
        </authorList>
    </citation>
    <scope>NUCLEOTIDE SEQUENCE [LARGE SCALE GENOMIC DNA]</scope>
    <source>
        <strain>Twist</strain>
    </source>
</reference>
<accession>Q83FZ1</accession>
<dbReference type="EMBL" id="AE014184">
    <property type="protein sequence ID" value="AAO44646.1"/>
    <property type="molecule type" value="Genomic_DNA"/>
</dbReference>
<dbReference type="RefSeq" id="WP_011096170.1">
    <property type="nucleotide sequence ID" value="NC_004572.3"/>
</dbReference>
<dbReference type="SMR" id="Q83FZ1"/>
<dbReference type="STRING" id="203267.TWT_549"/>
<dbReference type="GeneID" id="67387988"/>
<dbReference type="KEGG" id="twh:TWT_549"/>
<dbReference type="eggNOG" id="COG0091">
    <property type="taxonomic scope" value="Bacteria"/>
</dbReference>
<dbReference type="HOGENOM" id="CLU_083987_3_3_11"/>
<dbReference type="OrthoDB" id="9805969at2"/>
<dbReference type="Proteomes" id="UP000002200">
    <property type="component" value="Chromosome"/>
</dbReference>
<dbReference type="GO" id="GO:0022625">
    <property type="term" value="C:cytosolic large ribosomal subunit"/>
    <property type="evidence" value="ECO:0007669"/>
    <property type="project" value="TreeGrafter"/>
</dbReference>
<dbReference type="GO" id="GO:0019843">
    <property type="term" value="F:rRNA binding"/>
    <property type="evidence" value="ECO:0007669"/>
    <property type="project" value="UniProtKB-UniRule"/>
</dbReference>
<dbReference type="GO" id="GO:0003735">
    <property type="term" value="F:structural constituent of ribosome"/>
    <property type="evidence" value="ECO:0007669"/>
    <property type="project" value="InterPro"/>
</dbReference>
<dbReference type="GO" id="GO:0006412">
    <property type="term" value="P:translation"/>
    <property type="evidence" value="ECO:0007669"/>
    <property type="project" value="UniProtKB-UniRule"/>
</dbReference>
<dbReference type="CDD" id="cd00336">
    <property type="entry name" value="Ribosomal_L22"/>
    <property type="match status" value="1"/>
</dbReference>
<dbReference type="Gene3D" id="3.90.470.10">
    <property type="entry name" value="Ribosomal protein L22/L17"/>
    <property type="match status" value="1"/>
</dbReference>
<dbReference type="HAMAP" id="MF_01331_B">
    <property type="entry name" value="Ribosomal_uL22_B"/>
    <property type="match status" value="1"/>
</dbReference>
<dbReference type="InterPro" id="IPR001063">
    <property type="entry name" value="Ribosomal_uL22"/>
</dbReference>
<dbReference type="InterPro" id="IPR005727">
    <property type="entry name" value="Ribosomal_uL22_bac/chlpt-type"/>
</dbReference>
<dbReference type="InterPro" id="IPR047867">
    <property type="entry name" value="Ribosomal_uL22_bac/org-type"/>
</dbReference>
<dbReference type="InterPro" id="IPR018260">
    <property type="entry name" value="Ribosomal_uL22_CS"/>
</dbReference>
<dbReference type="InterPro" id="IPR036394">
    <property type="entry name" value="Ribosomal_uL22_sf"/>
</dbReference>
<dbReference type="NCBIfam" id="TIGR01044">
    <property type="entry name" value="rplV_bact"/>
    <property type="match status" value="1"/>
</dbReference>
<dbReference type="PANTHER" id="PTHR13501">
    <property type="entry name" value="CHLOROPLAST 50S RIBOSOMAL PROTEIN L22-RELATED"/>
    <property type="match status" value="1"/>
</dbReference>
<dbReference type="PANTHER" id="PTHR13501:SF8">
    <property type="entry name" value="LARGE RIBOSOMAL SUBUNIT PROTEIN UL22M"/>
    <property type="match status" value="1"/>
</dbReference>
<dbReference type="Pfam" id="PF00237">
    <property type="entry name" value="Ribosomal_L22"/>
    <property type="match status" value="1"/>
</dbReference>
<dbReference type="SUPFAM" id="SSF54843">
    <property type="entry name" value="Ribosomal protein L22"/>
    <property type="match status" value="1"/>
</dbReference>
<dbReference type="PROSITE" id="PS00464">
    <property type="entry name" value="RIBOSOMAL_L22"/>
    <property type="match status" value="1"/>
</dbReference>
<organism>
    <name type="scientific">Tropheryma whipplei (strain Twist)</name>
    <name type="common">Whipple's bacillus</name>
    <dbReference type="NCBI Taxonomy" id="203267"/>
    <lineage>
        <taxon>Bacteria</taxon>
        <taxon>Bacillati</taxon>
        <taxon>Actinomycetota</taxon>
        <taxon>Actinomycetes</taxon>
        <taxon>Micrococcales</taxon>
        <taxon>Tropherymataceae</taxon>
        <taxon>Tropheryma</taxon>
    </lineage>
</organism>
<gene>
    <name evidence="1" type="primary">rplV</name>
    <name type="ordered locus">TWT_549</name>
</gene>